<name>RSMB_YERPA</name>
<reference key="1">
    <citation type="journal article" date="2006" name="J. Bacteriol.">
        <title>Complete genome sequence of Yersinia pestis strains Antiqua and Nepal516: evidence of gene reduction in an emerging pathogen.</title>
        <authorList>
            <person name="Chain P.S.G."/>
            <person name="Hu P."/>
            <person name="Malfatti S.A."/>
            <person name="Radnedge L."/>
            <person name="Larimer F."/>
            <person name="Vergez L.M."/>
            <person name="Worsham P."/>
            <person name="Chu M.C."/>
            <person name="Andersen G.L."/>
        </authorList>
    </citation>
    <scope>NUCLEOTIDE SEQUENCE [LARGE SCALE GENOMIC DNA]</scope>
    <source>
        <strain>Antiqua</strain>
    </source>
</reference>
<organism>
    <name type="scientific">Yersinia pestis bv. Antiqua (strain Antiqua)</name>
    <dbReference type="NCBI Taxonomy" id="360102"/>
    <lineage>
        <taxon>Bacteria</taxon>
        <taxon>Pseudomonadati</taxon>
        <taxon>Pseudomonadota</taxon>
        <taxon>Gammaproteobacteria</taxon>
        <taxon>Enterobacterales</taxon>
        <taxon>Yersiniaceae</taxon>
        <taxon>Yersinia</taxon>
    </lineage>
</organism>
<dbReference type="EC" id="2.1.1.176" evidence="1"/>
<dbReference type="EMBL" id="CP000308">
    <property type="protein sequence ID" value="ABG15195.1"/>
    <property type="molecule type" value="Genomic_DNA"/>
</dbReference>
<dbReference type="RefSeq" id="WP_002215705.1">
    <property type="nucleotide sequence ID" value="NZ_CP009906.1"/>
</dbReference>
<dbReference type="SMR" id="Q1C2X7"/>
<dbReference type="GeneID" id="57974364"/>
<dbReference type="KEGG" id="ypa:YPA_3233"/>
<dbReference type="Proteomes" id="UP000001971">
    <property type="component" value="Chromosome"/>
</dbReference>
<dbReference type="GO" id="GO:0005829">
    <property type="term" value="C:cytosol"/>
    <property type="evidence" value="ECO:0007669"/>
    <property type="project" value="TreeGrafter"/>
</dbReference>
<dbReference type="GO" id="GO:0003723">
    <property type="term" value="F:RNA binding"/>
    <property type="evidence" value="ECO:0007669"/>
    <property type="project" value="UniProtKB-KW"/>
</dbReference>
<dbReference type="GO" id="GO:0009383">
    <property type="term" value="F:rRNA (cytosine-C5-)-methyltransferase activity"/>
    <property type="evidence" value="ECO:0007669"/>
    <property type="project" value="TreeGrafter"/>
</dbReference>
<dbReference type="GO" id="GO:0006355">
    <property type="term" value="P:regulation of DNA-templated transcription"/>
    <property type="evidence" value="ECO:0007669"/>
    <property type="project" value="InterPro"/>
</dbReference>
<dbReference type="GO" id="GO:0070475">
    <property type="term" value="P:rRNA base methylation"/>
    <property type="evidence" value="ECO:0007669"/>
    <property type="project" value="TreeGrafter"/>
</dbReference>
<dbReference type="CDD" id="cd02440">
    <property type="entry name" value="AdoMet_MTases"/>
    <property type="match status" value="1"/>
</dbReference>
<dbReference type="CDD" id="cd00620">
    <property type="entry name" value="Methyltransferase_Sun"/>
    <property type="match status" value="1"/>
</dbReference>
<dbReference type="FunFam" id="1.10.287.730:FF:000001">
    <property type="entry name" value="Ribosomal RNA small subunit methyltransferase B"/>
    <property type="match status" value="1"/>
</dbReference>
<dbReference type="FunFam" id="1.10.940.10:FF:000002">
    <property type="entry name" value="Ribosomal RNA small subunit methyltransferase B"/>
    <property type="match status" value="1"/>
</dbReference>
<dbReference type="FunFam" id="3.30.70.1170:FF:000002">
    <property type="entry name" value="Ribosomal RNA small subunit methyltransferase B"/>
    <property type="match status" value="1"/>
</dbReference>
<dbReference type="FunFam" id="3.40.50.150:FF:000022">
    <property type="entry name" value="Ribosomal RNA small subunit methyltransferase B"/>
    <property type="match status" value="1"/>
</dbReference>
<dbReference type="Gene3D" id="1.10.287.730">
    <property type="entry name" value="Helix hairpin bin"/>
    <property type="match status" value="1"/>
</dbReference>
<dbReference type="Gene3D" id="1.10.940.10">
    <property type="entry name" value="NusB-like"/>
    <property type="match status" value="1"/>
</dbReference>
<dbReference type="Gene3D" id="3.30.70.1170">
    <property type="entry name" value="Sun protein, domain 3"/>
    <property type="match status" value="1"/>
</dbReference>
<dbReference type="Gene3D" id="3.40.50.150">
    <property type="entry name" value="Vaccinia Virus protein VP39"/>
    <property type="match status" value="1"/>
</dbReference>
<dbReference type="HAMAP" id="MF_01856">
    <property type="entry name" value="16SrRNA_methyltr_B"/>
    <property type="match status" value="1"/>
</dbReference>
<dbReference type="InterPro" id="IPR049560">
    <property type="entry name" value="MeTrfase_RsmB-F_NOP2_cat"/>
</dbReference>
<dbReference type="InterPro" id="IPR001678">
    <property type="entry name" value="MeTrfase_RsmB-F_NOP2_dom"/>
</dbReference>
<dbReference type="InterPro" id="IPR035926">
    <property type="entry name" value="NusB-like_sf"/>
</dbReference>
<dbReference type="InterPro" id="IPR006027">
    <property type="entry name" value="NusB_RsmB_TIM44"/>
</dbReference>
<dbReference type="InterPro" id="IPR023267">
    <property type="entry name" value="RCMT"/>
</dbReference>
<dbReference type="InterPro" id="IPR004573">
    <property type="entry name" value="rRNA_ssu_MeTfrase_B"/>
</dbReference>
<dbReference type="InterPro" id="IPR023541">
    <property type="entry name" value="rRNA_ssu_MeTfrase_B_ent"/>
</dbReference>
<dbReference type="InterPro" id="IPR054728">
    <property type="entry name" value="RsmB-like_ferredoxin"/>
</dbReference>
<dbReference type="InterPro" id="IPR048019">
    <property type="entry name" value="RsmB-like_N"/>
</dbReference>
<dbReference type="InterPro" id="IPR018314">
    <property type="entry name" value="RsmB/NOL1/NOP2-like_CS"/>
</dbReference>
<dbReference type="InterPro" id="IPR029063">
    <property type="entry name" value="SAM-dependent_MTases_sf"/>
</dbReference>
<dbReference type="NCBIfam" id="NF008149">
    <property type="entry name" value="PRK10901.1"/>
    <property type="match status" value="1"/>
</dbReference>
<dbReference type="NCBIfam" id="NF011494">
    <property type="entry name" value="PRK14902.1"/>
    <property type="match status" value="1"/>
</dbReference>
<dbReference type="NCBIfam" id="TIGR00563">
    <property type="entry name" value="rsmB"/>
    <property type="match status" value="1"/>
</dbReference>
<dbReference type="PANTHER" id="PTHR22807:SF61">
    <property type="entry name" value="NOL1_NOP2_SUN FAMILY PROTEIN _ ANTITERMINATION NUSB DOMAIN-CONTAINING PROTEIN"/>
    <property type="match status" value="1"/>
</dbReference>
<dbReference type="PANTHER" id="PTHR22807">
    <property type="entry name" value="NOP2 YEAST -RELATED NOL1/NOP2/FMU SUN DOMAIN-CONTAINING"/>
    <property type="match status" value="1"/>
</dbReference>
<dbReference type="Pfam" id="PF01189">
    <property type="entry name" value="Methyltr_RsmB-F"/>
    <property type="match status" value="1"/>
</dbReference>
<dbReference type="Pfam" id="PF01029">
    <property type="entry name" value="NusB"/>
    <property type="match status" value="1"/>
</dbReference>
<dbReference type="Pfam" id="PF22458">
    <property type="entry name" value="RsmF-B_ferredox"/>
    <property type="match status" value="1"/>
</dbReference>
<dbReference type="PRINTS" id="PR02008">
    <property type="entry name" value="RCMTFAMILY"/>
</dbReference>
<dbReference type="SUPFAM" id="SSF48013">
    <property type="entry name" value="NusB-like"/>
    <property type="match status" value="1"/>
</dbReference>
<dbReference type="SUPFAM" id="SSF53335">
    <property type="entry name" value="S-adenosyl-L-methionine-dependent methyltransferases"/>
    <property type="match status" value="1"/>
</dbReference>
<dbReference type="PROSITE" id="PS01153">
    <property type="entry name" value="NOL1_NOP2_SUN"/>
    <property type="match status" value="1"/>
</dbReference>
<dbReference type="PROSITE" id="PS51686">
    <property type="entry name" value="SAM_MT_RSMB_NOP"/>
    <property type="match status" value="1"/>
</dbReference>
<accession>Q1C2X7</accession>
<proteinExistence type="inferred from homology"/>
<evidence type="ECO:0000255" key="1">
    <source>
        <dbReference type="HAMAP-Rule" id="MF_01856"/>
    </source>
</evidence>
<comment type="function">
    <text evidence="1">Specifically methylates the cytosine at position 967 (m5C967) of 16S rRNA.</text>
</comment>
<comment type="catalytic activity">
    <reaction evidence="1">
        <text>cytidine(967) in 16S rRNA + S-adenosyl-L-methionine = 5-methylcytidine(967) in 16S rRNA + S-adenosyl-L-homocysteine + H(+)</text>
        <dbReference type="Rhea" id="RHEA:42748"/>
        <dbReference type="Rhea" id="RHEA-COMP:10219"/>
        <dbReference type="Rhea" id="RHEA-COMP:10220"/>
        <dbReference type="ChEBI" id="CHEBI:15378"/>
        <dbReference type="ChEBI" id="CHEBI:57856"/>
        <dbReference type="ChEBI" id="CHEBI:59789"/>
        <dbReference type="ChEBI" id="CHEBI:74483"/>
        <dbReference type="ChEBI" id="CHEBI:82748"/>
        <dbReference type="EC" id="2.1.1.176"/>
    </reaction>
</comment>
<comment type="subcellular location">
    <subcellularLocation>
        <location evidence="1">Cytoplasm</location>
    </subcellularLocation>
</comment>
<comment type="similarity">
    <text evidence="1">Belongs to the class I-like SAM-binding methyltransferase superfamily. RsmB/NOP family.</text>
</comment>
<gene>
    <name evidence="1" type="primary">rsmB</name>
    <name evidence="1" type="synonym">sun</name>
    <name type="ordered locus">YPA_3233</name>
</gene>
<feature type="chain" id="PRO_0000366185" description="Ribosomal RNA small subunit methyltransferase B">
    <location>
        <begin position="1"/>
        <end position="429"/>
    </location>
</feature>
<feature type="active site" description="Nucleophile" evidence="1">
    <location>
        <position position="375"/>
    </location>
</feature>
<feature type="binding site" evidence="1">
    <location>
        <begin position="254"/>
        <end position="260"/>
    </location>
    <ligand>
        <name>S-adenosyl-L-methionine</name>
        <dbReference type="ChEBI" id="CHEBI:59789"/>
    </ligand>
</feature>
<feature type="binding site" evidence="1">
    <location>
        <position position="277"/>
    </location>
    <ligand>
        <name>S-adenosyl-L-methionine</name>
        <dbReference type="ChEBI" id="CHEBI:59789"/>
    </ligand>
</feature>
<feature type="binding site" evidence="1">
    <location>
        <position position="303"/>
    </location>
    <ligand>
        <name>S-adenosyl-L-methionine</name>
        <dbReference type="ChEBI" id="CHEBI:59789"/>
    </ligand>
</feature>
<feature type="binding site" evidence="1">
    <location>
        <position position="322"/>
    </location>
    <ligand>
        <name>S-adenosyl-L-methionine</name>
        <dbReference type="ChEBI" id="CHEBI:59789"/>
    </ligand>
</feature>
<sequence>MKNTYNLRSIAAKAISQVLDQGQSLSAVLPELQKNISDKDRALLQELCFGTLRVLPQLEWCIQQLMARPMTGKQRVFHYLIMVGLYQLIYTRIPPHAALAETVEGATVLKRPQLKGLINGVLRQFQRQQVELLERAVNNDSHYLHPSWLLARIKQAYPAQWQQILDANNQRPPMWLRVNRLHHSRSEYLELLTQADINAEPHPIYRDAVRLITPCAVNHLPGFELGWVTVQDASAQGCVDLLDPQNGEQILDLCAAPGGKTTHILEAAPKAHVLAVDIDEQRLSRVKENLQRLQLQAVVRVGDGRAPDTWCGDQQFDRILLDAPCSATGVIRRHPDIKWLRRDRDISELAQLQSEIIEAIWPKLKHGGVLVYATCSILPEENQQQIAAFLQRHPEAQLTETGTTAAPGKQNLPHPEDGDGFFYAKIIKK</sequence>
<protein>
    <recommendedName>
        <fullName evidence="1">Ribosomal RNA small subunit methyltransferase B</fullName>
        <ecNumber evidence="1">2.1.1.176</ecNumber>
    </recommendedName>
    <alternativeName>
        <fullName evidence="1">16S rRNA m5C967 methyltransferase</fullName>
    </alternativeName>
    <alternativeName>
        <fullName evidence="1">rRNA (cytosine-C(5)-)-methyltransferase RsmB</fullName>
    </alternativeName>
</protein>
<keyword id="KW-0963">Cytoplasm</keyword>
<keyword id="KW-0489">Methyltransferase</keyword>
<keyword id="KW-0694">RNA-binding</keyword>
<keyword id="KW-0698">rRNA processing</keyword>
<keyword id="KW-0949">S-adenosyl-L-methionine</keyword>
<keyword id="KW-0808">Transferase</keyword>